<accession>A5GR11</accession>
<protein>
    <recommendedName>
        <fullName evidence="1">Photosystem II reaction center protein T</fullName>
        <shortName evidence="1">PSII-T</shortName>
    </recommendedName>
</protein>
<organism>
    <name type="scientific">Synechococcus sp. (strain RCC307)</name>
    <dbReference type="NCBI Taxonomy" id="316278"/>
    <lineage>
        <taxon>Bacteria</taxon>
        <taxon>Bacillati</taxon>
        <taxon>Cyanobacteriota</taxon>
        <taxon>Cyanophyceae</taxon>
        <taxon>Synechococcales</taxon>
        <taxon>Synechococcaceae</taxon>
        <taxon>Synechococcus</taxon>
    </lineage>
</organism>
<sequence>MESFAYILILAFSIGTLFFAIALRDPPKIGK</sequence>
<comment type="function">
    <text evidence="1">Found at the monomer-monomer interface of the photosystem II (PS II) dimer, plays a role in assembly and dimerization of PSII. PSII is a light-driven water plastoquinone oxidoreductase, using light energy to abstract electrons from H(2)O, generating a proton gradient subsequently used for ATP formation.</text>
</comment>
<comment type="subunit">
    <text evidence="1">PSII is composed of 1 copy each of membrane proteins PsbA, PsbB, PsbC, PsbD, PsbE, PsbF, PsbH, PsbI, PsbJ, PsbK, PsbL, PsbM, PsbT, PsbX, PsbY, PsbZ, Psb30/Ycf12, peripheral proteins PsbO, CyanoQ (PsbQ), PsbU, PsbV and a large number of cofactors. It forms dimeric complexes.</text>
</comment>
<comment type="subcellular location">
    <subcellularLocation>
        <location evidence="1">Cellular thylakoid membrane</location>
        <topology evidence="1">Single-pass membrane protein</topology>
    </subcellularLocation>
</comment>
<comment type="similarity">
    <text evidence="1">Belongs to the PsbT family.</text>
</comment>
<feature type="chain" id="PRO_1000047103" description="Photosystem II reaction center protein T">
    <location>
        <begin position="1"/>
        <end position="31"/>
    </location>
</feature>
<feature type="transmembrane region" description="Helical" evidence="1">
    <location>
        <begin position="3"/>
        <end position="23"/>
    </location>
</feature>
<name>PSBT_SYNR3</name>
<dbReference type="EMBL" id="CT978603">
    <property type="protein sequence ID" value="CAK27320.1"/>
    <property type="molecule type" value="Genomic_DNA"/>
</dbReference>
<dbReference type="SMR" id="A5GR11"/>
<dbReference type="STRING" id="316278.SynRCC307_0417"/>
<dbReference type="KEGG" id="syr:SynRCC307_0417"/>
<dbReference type="eggNOG" id="ENOG50323KB">
    <property type="taxonomic scope" value="Bacteria"/>
</dbReference>
<dbReference type="HOGENOM" id="CLU_217078_1_0_3"/>
<dbReference type="OrthoDB" id="427659at2"/>
<dbReference type="Proteomes" id="UP000001115">
    <property type="component" value="Chromosome"/>
</dbReference>
<dbReference type="GO" id="GO:0009539">
    <property type="term" value="C:photosystem II reaction center"/>
    <property type="evidence" value="ECO:0007669"/>
    <property type="project" value="InterPro"/>
</dbReference>
<dbReference type="GO" id="GO:0031676">
    <property type="term" value="C:plasma membrane-derived thylakoid membrane"/>
    <property type="evidence" value="ECO:0007669"/>
    <property type="project" value="UniProtKB-SubCell"/>
</dbReference>
<dbReference type="GO" id="GO:0015979">
    <property type="term" value="P:photosynthesis"/>
    <property type="evidence" value="ECO:0007669"/>
    <property type="project" value="UniProtKB-UniRule"/>
</dbReference>
<dbReference type="HAMAP" id="MF_00808">
    <property type="entry name" value="PSII_PsbT"/>
    <property type="match status" value="1"/>
</dbReference>
<dbReference type="InterPro" id="IPR001743">
    <property type="entry name" value="PSII_PsbT"/>
</dbReference>
<dbReference type="InterPro" id="IPR037268">
    <property type="entry name" value="PSII_PsbT_sf"/>
</dbReference>
<dbReference type="NCBIfam" id="NF008825">
    <property type="entry name" value="PRK11875.1"/>
    <property type="match status" value="1"/>
</dbReference>
<dbReference type="Pfam" id="PF01405">
    <property type="entry name" value="PsbT"/>
    <property type="match status" value="1"/>
</dbReference>
<dbReference type="SUPFAM" id="SSF161029">
    <property type="entry name" value="Photosystem II reaction center protein T, PsbT"/>
    <property type="match status" value="1"/>
</dbReference>
<proteinExistence type="inferred from homology"/>
<keyword id="KW-0472">Membrane</keyword>
<keyword id="KW-0602">Photosynthesis</keyword>
<keyword id="KW-0604">Photosystem II</keyword>
<keyword id="KW-1185">Reference proteome</keyword>
<keyword id="KW-0793">Thylakoid</keyword>
<keyword id="KW-0812">Transmembrane</keyword>
<keyword id="KW-1133">Transmembrane helix</keyword>
<gene>
    <name evidence="1" type="primary">psbT</name>
    <name type="ordered locus">SynRCC307_0417</name>
</gene>
<reference key="1">
    <citation type="submission" date="2006-05" db="EMBL/GenBank/DDBJ databases">
        <authorList>
            <consortium name="Genoscope"/>
        </authorList>
    </citation>
    <scope>NUCLEOTIDE SEQUENCE [LARGE SCALE GENOMIC DNA]</scope>
    <source>
        <strain>RCC307</strain>
    </source>
</reference>
<evidence type="ECO:0000255" key="1">
    <source>
        <dbReference type="HAMAP-Rule" id="MF_00808"/>
    </source>
</evidence>